<organism>
    <name type="scientific">Salmonella agona (strain SL483)</name>
    <dbReference type="NCBI Taxonomy" id="454166"/>
    <lineage>
        <taxon>Bacteria</taxon>
        <taxon>Pseudomonadati</taxon>
        <taxon>Pseudomonadota</taxon>
        <taxon>Gammaproteobacteria</taxon>
        <taxon>Enterobacterales</taxon>
        <taxon>Enterobacteriaceae</taxon>
        <taxon>Salmonella</taxon>
    </lineage>
</organism>
<keyword id="KW-0240">DNA-directed RNA polymerase</keyword>
<keyword id="KW-0548">Nucleotidyltransferase</keyword>
<keyword id="KW-0804">Transcription</keyword>
<keyword id="KW-0808">Transferase</keyword>
<evidence type="ECO:0000255" key="1">
    <source>
        <dbReference type="HAMAP-Rule" id="MF_01321"/>
    </source>
</evidence>
<accession>B5F0W7</accession>
<sequence>MVYSYTEKKRIRKDFGKRPQVLDVPYLLSIQLDSFQKFIEQDPEGQYGLEAAFRSVFPIQSYSGNSELQYVSYRLGEPVFDVQECQIRGVTYSAPLRVKLRLVIYEREAPEGTVKDIKEQEVYMGEIPLMTDNGTFVINGTERVIVSQLHRSPGVFFDSDKGKTHSSGKVLYNARIIPYRGSWLDFEFDPKDNLFVRIDRRRKLPATIILRALNYTTEQILDLFFEKVVFEIRDNKLQMELIPERLRGETASFDIEANGKVYVEKGRRITARHIRQLEKDDIKHIEVPVEYIAGKVVSKDYVDESTGELICAANMELSLDLLAKLSQSGHKRIETLFTNDLDHGPYISETVRVDPTNDRLSALVEIYRMMRPGEPPTREAAESLFENLFFSEDRYDLSAVGRMKFNRSLLRDEIEGSGILSKDDIIDVMKKLIDIRNGKGEVDDIDHLGNRRIRSVGEMAENQFRVGLVRVERAVKERLSLGDLDTLMPQDMINAKPISAAVKEFFGSSQLSQFMDQNNPLSEITHKRRISALGPGGLTRERAGFEVRDVHPTHYGRVCPIETPEGPNIGLINSLSVYAQTNEYGFLETPYRRVVDGVVTDEIHYLSAIEEGNYVIAQANSNLDDEGHFVEDLVTCRSKGESSLFSRDQVDYMDVSTQQVVSVGASLIPFLEHDDANRALMGANMQRQAVPTLRADKPLVGTGMERAVAVDSGVTAVAKRGGTVQYVDASRIVIKVNEDEMYPGEAGIDIYNLTKYTRSNQNTCINQMPCVSLGEPVERGDVLADGPSTDLGELALGQNMRVAFMPWNGYNFEDSILVSERVVQEDRFTTIHIQELACVSRDTKLGPEEITADIPNVGEAALSKLDESGIVYIGAEVTGGDILVGKVTPKGETQLTPEEKLLRAIFGEKASDVKDSSLRVPNGVSGTVIDVQVFTRDGVEKDKRALEIEEMQLKQAKKDLSEELQILEAGLFSRIRAVLVSGGVEAEKLDKLPRDRWLELGLTDEEKQNQLEQLAEQYDELKHEFEKKLEAKRRKITQGDDLAPGVLKIVKVYLAVKRRIQPGDKMAGRHGNKGVISKINPIEDMPYDENGTPVDIVLNPLGVPSRMNIGQILETHLGMAAKGIGDKINAMLKQQQEVAKLREFIQRAYDLGADVRQKVDLSTFSDDEVLRLAENLRKGMPIATPVFDGAKEAEIKELLKLGDLPTSGQITLFDGRTGEQFERPVTVGYMYMLKLNHLVDDKMHARSTGSYSLVTQQPLGGKAQFGGQRFGEMEVWALEAYGAAYTLQEMLTVKSDDVNGRTKMYKNIVDGNHQMEPGMPESFNVLLKEIRSLGINIELEDE</sequence>
<name>RPOB_SALA4</name>
<comment type="function">
    <text evidence="1">DNA-dependent RNA polymerase catalyzes the transcription of DNA into RNA using the four ribonucleoside triphosphates as substrates.</text>
</comment>
<comment type="catalytic activity">
    <reaction evidence="1">
        <text>RNA(n) + a ribonucleoside 5'-triphosphate = RNA(n+1) + diphosphate</text>
        <dbReference type="Rhea" id="RHEA:21248"/>
        <dbReference type="Rhea" id="RHEA-COMP:14527"/>
        <dbReference type="Rhea" id="RHEA-COMP:17342"/>
        <dbReference type="ChEBI" id="CHEBI:33019"/>
        <dbReference type="ChEBI" id="CHEBI:61557"/>
        <dbReference type="ChEBI" id="CHEBI:140395"/>
        <dbReference type="EC" id="2.7.7.6"/>
    </reaction>
</comment>
<comment type="subunit">
    <text evidence="1">The RNAP catalytic core consists of 2 alpha, 1 beta, 1 beta' and 1 omega subunit. When a sigma factor is associated with the core the holoenzyme is formed, which can initiate transcription.</text>
</comment>
<comment type="similarity">
    <text evidence="1">Belongs to the RNA polymerase beta chain family.</text>
</comment>
<feature type="chain" id="PRO_1000141729" description="DNA-directed RNA polymerase subunit beta">
    <location>
        <begin position="1"/>
        <end position="1342"/>
    </location>
</feature>
<reference key="1">
    <citation type="journal article" date="2011" name="J. Bacteriol.">
        <title>Comparative genomics of 28 Salmonella enterica isolates: evidence for CRISPR-mediated adaptive sublineage evolution.</title>
        <authorList>
            <person name="Fricke W.F."/>
            <person name="Mammel M.K."/>
            <person name="McDermott P.F."/>
            <person name="Tartera C."/>
            <person name="White D.G."/>
            <person name="Leclerc J.E."/>
            <person name="Ravel J."/>
            <person name="Cebula T.A."/>
        </authorList>
    </citation>
    <scope>NUCLEOTIDE SEQUENCE [LARGE SCALE GENOMIC DNA]</scope>
    <source>
        <strain>SL483</strain>
    </source>
</reference>
<gene>
    <name evidence="1" type="primary">rpoB</name>
    <name type="ordered locus">SeAg_B4396</name>
</gene>
<dbReference type="EC" id="2.7.7.6" evidence="1"/>
<dbReference type="EMBL" id="CP001138">
    <property type="protein sequence ID" value="ACH52168.1"/>
    <property type="molecule type" value="Genomic_DNA"/>
</dbReference>
<dbReference type="RefSeq" id="WP_000263105.1">
    <property type="nucleotide sequence ID" value="NC_011149.1"/>
</dbReference>
<dbReference type="SMR" id="B5F0W7"/>
<dbReference type="KEGG" id="sea:SeAg_B4396"/>
<dbReference type="HOGENOM" id="CLU_000524_4_0_6"/>
<dbReference type="Proteomes" id="UP000008819">
    <property type="component" value="Chromosome"/>
</dbReference>
<dbReference type="GO" id="GO:0000428">
    <property type="term" value="C:DNA-directed RNA polymerase complex"/>
    <property type="evidence" value="ECO:0007669"/>
    <property type="project" value="UniProtKB-KW"/>
</dbReference>
<dbReference type="GO" id="GO:0003677">
    <property type="term" value="F:DNA binding"/>
    <property type="evidence" value="ECO:0007669"/>
    <property type="project" value="UniProtKB-UniRule"/>
</dbReference>
<dbReference type="GO" id="GO:0003899">
    <property type="term" value="F:DNA-directed RNA polymerase activity"/>
    <property type="evidence" value="ECO:0007669"/>
    <property type="project" value="UniProtKB-UniRule"/>
</dbReference>
<dbReference type="GO" id="GO:0032549">
    <property type="term" value="F:ribonucleoside binding"/>
    <property type="evidence" value="ECO:0007669"/>
    <property type="project" value="InterPro"/>
</dbReference>
<dbReference type="GO" id="GO:0006351">
    <property type="term" value="P:DNA-templated transcription"/>
    <property type="evidence" value="ECO:0007669"/>
    <property type="project" value="UniProtKB-UniRule"/>
</dbReference>
<dbReference type="CDD" id="cd00653">
    <property type="entry name" value="RNA_pol_B_RPB2"/>
    <property type="match status" value="1"/>
</dbReference>
<dbReference type="FunFam" id="2.30.150.10:FF:000001">
    <property type="entry name" value="DNA-directed RNA polymerase subunit beta"/>
    <property type="match status" value="1"/>
</dbReference>
<dbReference type="FunFam" id="2.40.270.10:FF:000003">
    <property type="entry name" value="DNA-directed RNA polymerase subunit beta"/>
    <property type="match status" value="1"/>
</dbReference>
<dbReference type="FunFam" id="2.40.270.10:FF:000004">
    <property type="entry name" value="DNA-directed RNA polymerase subunit beta"/>
    <property type="match status" value="1"/>
</dbReference>
<dbReference type="FunFam" id="2.40.50.100:FF:000006">
    <property type="entry name" value="DNA-directed RNA polymerase subunit beta"/>
    <property type="match status" value="1"/>
</dbReference>
<dbReference type="FunFam" id="2.40.50.150:FF:000001">
    <property type="entry name" value="DNA-directed RNA polymerase subunit beta"/>
    <property type="match status" value="1"/>
</dbReference>
<dbReference type="FunFam" id="3.90.1100.10:FF:000002">
    <property type="entry name" value="DNA-directed RNA polymerase subunit beta"/>
    <property type="match status" value="1"/>
</dbReference>
<dbReference type="FunFam" id="3.90.1110.10:FF:000001">
    <property type="entry name" value="DNA-directed RNA polymerase subunit beta"/>
    <property type="match status" value="1"/>
</dbReference>
<dbReference type="FunFam" id="3.90.1110.10:FF:000004">
    <property type="entry name" value="DNA-directed RNA polymerase subunit beta"/>
    <property type="match status" value="1"/>
</dbReference>
<dbReference type="FunFam" id="3.90.1800.10:FF:000001">
    <property type="entry name" value="DNA-directed RNA polymerase subunit beta"/>
    <property type="match status" value="1"/>
</dbReference>
<dbReference type="Gene3D" id="2.40.50.100">
    <property type="match status" value="1"/>
</dbReference>
<dbReference type="Gene3D" id="2.40.50.150">
    <property type="match status" value="1"/>
</dbReference>
<dbReference type="Gene3D" id="3.90.1100.10">
    <property type="match status" value="2"/>
</dbReference>
<dbReference type="Gene3D" id="6.10.140.1670">
    <property type="match status" value="1"/>
</dbReference>
<dbReference type="Gene3D" id="2.30.150.10">
    <property type="entry name" value="DNA-directed RNA polymerase, beta subunit, external 1 domain"/>
    <property type="match status" value="1"/>
</dbReference>
<dbReference type="Gene3D" id="2.40.270.10">
    <property type="entry name" value="DNA-directed RNA polymerase, subunit 2, domain 6"/>
    <property type="match status" value="1"/>
</dbReference>
<dbReference type="Gene3D" id="3.90.1800.10">
    <property type="entry name" value="RNA polymerase alpha subunit dimerisation domain"/>
    <property type="match status" value="1"/>
</dbReference>
<dbReference type="Gene3D" id="3.90.1110.10">
    <property type="entry name" value="RNA polymerase Rpb2, domain 2"/>
    <property type="match status" value="1"/>
</dbReference>
<dbReference type="HAMAP" id="MF_01321">
    <property type="entry name" value="RNApol_bact_RpoB"/>
    <property type="match status" value="1"/>
</dbReference>
<dbReference type="InterPro" id="IPR042107">
    <property type="entry name" value="DNA-dir_RNA_pol_bsu_ext_1_sf"/>
</dbReference>
<dbReference type="InterPro" id="IPR019462">
    <property type="entry name" value="DNA-dir_RNA_pol_bsu_external_1"/>
</dbReference>
<dbReference type="InterPro" id="IPR015712">
    <property type="entry name" value="DNA-dir_RNA_pol_su2"/>
</dbReference>
<dbReference type="InterPro" id="IPR007120">
    <property type="entry name" value="DNA-dir_RNAP_su2_dom"/>
</dbReference>
<dbReference type="InterPro" id="IPR037033">
    <property type="entry name" value="DNA-dir_RNAP_su2_hyb_sf"/>
</dbReference>
<dbReference type="InterPro" id="IPR010243">
    <property type="entry name" value="RNA_pol_bsu_bac"/>
</dbReference>
<dbReference type="InterPro" id="IPR007121">
    <property type="entry name" value="RNA_pol_bsu_CS"/>
</dbReference>
<dbReference type="InterPro" id="IPR007644">
    <property type="entry name" value="RNA_pol_bsu_protrusion"/>
</dbReference>
<dbReference type="InterPro" id="IPR007642">
    <property type="entry name" value="RNA_pol_Rpb2_2"/>
</dbReference>
<dbReference type="InterPro" id="IPR037034">
    <property type="entry name" value="RNA_pol_Rpb2_2_sf"/>
</dbReference>
<dbReference type="InterPro" id="IPR007645">
    <property type="entry name" value="RNA_pol_Rpb2_3"/>
</dbReference>
<dbReference type="InterPro" id="IPR007641">
    <property type="entry name" value="RNA_pol_Rpb2_7"/>
</dbReference>
<dbReference type="InterPro" id="IPR014724">
    <property type="entry name" value="RNA_pol_RPB2_OB-fold"/>
</dbReference>
<dbReference type="NCBIfam" id="NF001616">
    <property type="entry name" value="PRK00405.1"/>
    <property type="match status" value="1"/>
</dbReference>
<dbReference type="NCBIfam" id="TIGR02013">
    <property type="entry name" value="rpoB"/>
    <property type="match status" value="1"/>
</dbReference>
<dbReference type="PANTHER" id="PTHR20856">
    <property type="entry name" value="DNA-DIRECTED RNA POLYMERASE I SUBUNIT 2"/>
    <property type="match status" value="1"/>
</dbReference>
<dbReference type="Pfam" id="PF04563">
    <property type="entry name" value="RNA_pol_Rpb2_1"/>
    <property type="match status" value="1"/>
</dbReference>
<dbReference type="Pfam" id="PF04561">
    <property type="entry name" value="RNA_pol_Rpb2_2"/>
    <property type="match status" value="2"/>
</dbReference>
<dbReference type="Pfam" id="PF04565">
    <property type="entry name" value="RNA_pol_Rpb2_3"/>
    <property type="match status" value="1"/>
</dbReference>
<dbReference type="Pfam" id="PF10385">
    <property type="entry name" value="RNA_pol_Rpb2_45"/>
    <property type="match status" value="1"/>
</dbReference>
<dbReference type="Pfam" id="PF00562">
    <property type="entry name" value="RNA_pol_Rpb2_6"/>
    <property type="match status" value="1"/>
</dbReference>
<dbReference type="Pfam" id="PF04560">
    <property type="entry name" value="RNA_pol_Rpb2_7"/>
    <property type="match status" value="1"/>
</dbReference>
<dbReference type="SUPFAM" id="SSF64484">
    <property type="entry name" value="beta and beta-prime subunits of DNA dependent RNA-polymerase"/>
    <property type="match status" value="1"/>
</dbReference>
<dbReference type="PROSITE" id="PS01166">
    <property type="entry name" value="RNA_POL_BETA"/>
    <property type="match status" value="1"/>
</dbReference>
<protein>
    <recommendedName>
        <fullName evidence="1">DNA-directed RNA polymerase subunit beta</fullName>
        <shortName evidence="1">RNAP subunit beta</shortName>
        <ecNumber evidence="1">2.7.7.6</ecNumber>
    </recommendedName>
    <alternativeName>
        <fullName evidence="1">RNA polymerase subunit beta</fullName>
    </alternativeName>
    <alternativeName>
        <fullName evidence="1">Transcriptase subunit beta</fullName>
    </alternativeName>
</protein>
<proteinExistence type="inferred from homology"/>